<proteinExistence type="inferred from homology"/>
<dbReference type="EC" id="2.4.1.227" evidence="1"/>
<dbReference type="EMBL" id="CP000529">
    <property type="protein sequence ID" value="ABM38714.1"/>
    <property type="molecule type" value="Genomic_DNA"/>
</dbReference>
<dbReference type="RefSeq" id="WP_011802785.1">
    <property type="nucleotide sequence ID" value="NC_008781.1"/>
</dbReference>
<dbReference type="SMR" id="A1VST6"/>
<dbReference type="STRING" id="365044.Pnap_3417"/>
<dbReference type="CAZy" id="GT28">
    <property type="family name" value="Glycosyltransferase Family 28"/>
</dbReference>
<dbReference type="KEGG" id="pna:Pnap_3417"/>
<dbReference type="eggNOG" id="COG0707">
    <property type="taxonomic scope" value="Bacteria"/>
</dbReference>
<dbReference type="HOGENOM" id="CLU_037404_2_1_4"/>
<dbReference type="OrthoDB" id="9808936at2"/>
<dbReference type="UniPathway" id="UPA00219"/>
<dbReference type="Proteomes" id="UP000000644">
    <property type="component" value="Chromosome"/>
</dbReference>
<dbReference type="GO" id="GO:0005886">
    <property type="term" value="C:plasma membrane"/>
    <property type="evidence" value="ECO:0007669"/>
    <property type="project" value="UniProtKB-SubCell"/>
</dbReference>
<dbReference type="GO" id="GO:0051991">
    <property type="term" value="F:UDP-N-acetyl-D-glucosamine:N-acetylmuramoyl-L-alanyl-D-glutamyl-meso-2,6-diaminopimelyl-D-alanyl-D-alanine-diphosphoundecaprenol 4-beta-N-acetylglucosaminlytransferase activity"/>
    <property type="evidence" value="ECO:0007669"/>
    <property type="project" value="RHEA"/>
</dbReference>
<dbReference type="GO" id="GO:0050511">
    <property type="term" value="F:undecaprenyldiphospho-muramoylpentapeptide beta-N-acetylglucosaminyltransferase activity"/>
    <property type="evidence" value="ECO:0007669"/>
    <property type="project" value="UniProtKB-UniRule"/>
</dbReference>
<dbReference type="GO" id="GO:0005975">
    <property type="term" value="P:carbohydrate metabolic process"/>
    <property type="evidence" value="ECO:0007669"/>
    <property type="project" value="InterPro"/>
</dbReference>
<dbReference type="GO" id="GO:0051301">
    <property type="term" value="P:cell division"/>
    <property type="evidence" value="ECO:0007669"/>
    <property type="project" value="UniProtKB-KW"/>
</dbReference>
<dbReference type="GO" id="GO:0071555">
    <property type="term" value="P:cell wall organization"/>
    <property type="evidence" value="ECO:0007669"/>
    <property type="project" value="UniProtKB-KW"/>
</dbReference>
<dbReference type="GO" id="GO:0030259">
    <property type="term" value="P:lipid glycosylation"/>
    <property type="evidence" value="ECO:0007669"/>
    <property type="project" value="UniProtKB-UniRule"/>
</dbReference>
<dbReference type="GO" id="GO:0009252">
    <property type="term" value="P:peptidoglycan biosynthetic process"/>
    <property type="evidence" value="ECO:0007669"/>
    <property type="project" value="UniProtKB-UniRule"/>
</dbReference>
<dbReference type="GO" id="GO:0008360">
    <property type="term" value="P:regulation of cell shape"/>
    <property type="evidence" value="ECO:0007669"/>
    <property type="project" value="UniProtKB-KW"/>
</dbReference>
<dbReference type="CDD" id="cd03785">
    <property type="entry name" value="GT28_MurG"/>
    <property type="match status" value="1"/>
</dbReference>
<dbReference type="Gene3D" id="3.40.50.2000">
    <property type="entry name" value="Glycogen Phosphorylase B"/>
    <property type="match status" value="2"/>
</dbReference>
<dbReference type="HAMAP" id="MF_00033">
    <property type="entry name" value="MurG"/>
    <property type="match status" value="1"/>
</dbReference>
<dbReference type="InterPro" id="IPR006009">
    <property type="entry name" value="GlcNAc_MurG"/>
</dbReference>
<dbReference type="InterPro" id="IPR007235">
    <property type="entry name" value="Glyco_trans_28_C"/>
</dbReference>
<dbReference type="InterPro" id="IPR004276">
    <property type="entry name" value="GlycoTrans_28_N"/>
</dbReference>
<dbReference type="NCBIfam" id="TIGR01133">
    <property type="entry name" value="murG"/>
    <property type="match status" value="1"/>
</dbReference>
<dbReference type="PANTHER" id="PTHR21015:SF22">
    <property type="entry name" value="GLYCOSYLTRANSFERASE"/>
    <property type="match status" value="1"/>
</dbReference>
<dbReference type="PANTHER" id="PTHR21015">
    <property type="entry name" value="UDP-N-ACETYLGLUCOSAMINE--N-ACETYLMURAMYL-(PENTAPEPTIDE) PYROPHOSPHORYL-UNDECAPRENOL N-ACETYLGLUCOSAMINE TRANSFERASE 1"/>
    <property type="match status" value="1"/>
</dbReference>
<dbReference type="Pfam" id="PF04101">
    <property type="entry name" value="Glyco_tran_28_C"/>
    <property type="match status" value="1"/>
</dbReference>
<dbReference type="Pfam" id="PF03033">
    <property type="entry name" value="Glyco_transf_28"/>
    <property type="match status" value="1"/>
</dbReference>
<dbReference type="SUPFAM" id="SSF53756">
    <property type="entry name" value="UDP-Glycosyltransferase/glycogen phosphorylase"/>
    <property type="match status" value="1"/>
</dbReference>
<feature type="chain" id="PRO_0000315135" description="UDP-N-acetylglucosamine--N-acetylmuramyl-(pentapeptide) pyrophosphoryl-undecaprenol N-acetylglucosamine transferase">
    <location>
        <begin position="1"/>
        <end position="360"/>
    </location>
</feature>
<feature type="binding site" evidence="1">
    <location>
        <begin position="14"/>
        <end position="16"/>
    </location>
    <ligand>
        <name>UDP-N-acetyl-alpha-D-glucosamine</name>
        <dbReference type="ChEBI" id="CHEBI:57705"/>
    </ligand>
</feature>
<feature type="binding site" evidence="1">
    <location>
        <position position="131"/>
    </location>
    <ligand>
        <name>UDP-N-acetyl-alpha-D-glucosamine</name>
        <dbReference type="ChEBI" id="CHEBI:57705"/>
    </ligand>
</feature>
<feature type="binding site" evidence="1">
    <location>
        <position position="167"/>
    </location>
    <ligand>
        <name>UDP-N-acetyl-alpha-D-glucosamine</name>
        <dbReference type="ChEBI" id="CHEBI:57705"/>
    </ligand>
</feature>
<feature type="binding site" evidence="1">
    <location>
        <position position="195"/>
    </location>
    <ligand>
        <name>UDP-N-acetyl-alpha-D-glucosamine</name>
        <dbReference type="ChEBI" id="CHEBI:57705"/>
    </ligand>
</feature>
<feature type="binding site" evidence="1">
    <location>
        <position position="249"/>
    </location>
    <ligand>
        <name>UDP-N-acetyl-alpha-D-glucosamine</name>
        <dbReference type="ChEBI" id="CHEBI:57705"/>
    </ligand>
</feature>
<feature type="binding site" evidence="1">
    <location>
        <position position="294"/>
    </location>
    <ligand>
        <name>UDP-N-acetyl-alpha-D-glucosamine</name>
        <dbReference type="ChEBI" id="CHEBI:57705"/>
    </ligand>
</feature>
<accession>A1VST6</accession>
<evidence type="ECO:0000255" key="1">
    <source>
        <dbReference type="HAMAP-Rule" id="MF_00033"/>
    </source>
</evidence>
<sequence length="360" mass="38261">MSRQRCALVMAGGTGGHIFPGLAVAEALRERGWRVHWLGGKGSAARPSMESQLVPPRGFSFETIDFSGVRGKGPVTLALLPLRLLKAFWQSVQVIRRVKPDVVVGLGGYIAFPAGMMSVLLGKPLVLHEQNSVAGMVNKVLASVADRVFTAFPDVLKKAEWVGNPLRPAFTRQLDPAVRFAQRRGPLKLLVVGGSLGATALNELVPKALALIPAASRPQVIHQSGARQLEALRANYQAAGVNAELTPFIEDTAQAFADADLIICRAGASTVTEIAAVGAAALFVPFPSAVDDHQTVNAKFLVAHGGGWLVQQRDLTPSILATMLQKTERLALVQSALQAKTMQKIDATSHLVAACEELAP</sequence>
<comment type="function">
    <text evidence="1">Cell wall formation. Catalyzes the transfer of a GlcNAc subunit on undecaprenyl-pyrophosphoryl-MurNAc-pentapeptide (lipid intermediate I) to form undecaprenyl-pyrophosphoryl-MurNAc-(pentapeptide)GlcNAc (lipid intermediate II).</text>
</comment>
<comment type="catalytic activity">
    <reaction evidence="1">
        <text>di-trans,octa-cis-undecaprenyl diphospho-N-acetyl-alpha-D-muramoyl-L-alanyl-D-glutamyl-meso-2,6-diaminopimeloyl-D-alanyl-D-alanine + UDP-N-acetyl-alpha-D-glucosamine = di-trans,octa-cis-undecaprenyl diphospho-[N-acetyl-alpha-D-glucosaminyl-(1-&gt;4)]-N-acetyl-alpha-D-muramoyl-L-alanyl-D-glutamyl-meso-2,6-diaminopimeloyl-D-alanyl-D-alanine + UDP + H(+)</text>
        <dbReference type="Rhea" id="RHEA:31227"/>
        <dbReference type="ChEBI" id="CHEBI:15378"/>
        <dbReference type="ChEBI" id="CHEBI:57705"/>
        <dbReference type="ChEBI" id="CHEBI:58223"/>
        <dbReference type="ChEBI" id="CHEBI:61387"/>
        <dbReference type="ChEBI" id="CHEBI:61388"/>
        <dbReference type="EC" id="2.4.1.227"/>
    </reaction>
</comment>
<comment type="pathway">
    <text evidence="1">Cell wall biogenesis; peptidoglycan biosynthesis.</text>
</comment>
<comment type="subcellular location">
    <subcellularLocation>
        <location evidence="1">Cell inner membrane</location>
        <topology evidence="1">Peripheral membrane protein</topology>
        <orientation evidence="1">Cytoplasmic side</orientation>
    </subcellularLocation>
</comment>
<comment type="similarity">
    <text evidence="1">Belongs to the glycosyltransferase 28 family. MurG subfamily.</text>
</comment>
<gene>
    <name evidence="1" type="primary">murG</name>
    <name type="ordered locus">Pnap_3417</name>
</gene>
<protein>
    <recommendedName>
        <fullName evidence="1">UDP-N-acetylglucosamine--N-acetylmuramyl-(pentapeptide) pyrophosphoryl-undecaprenol N-acetylglucosamine transferase</fullName>
        <ecNumber evidence="1">2.4.1.227</ecNumber>
    </recommendedName>
    <alternativeName>
        <fullName evidence="1">Undecaprenyl-PP-MurNAc-pentapeptide-UDPGlcNAc GlcNAc transferase</fullName>
    </alternativeName>
</protein>
<name>MURG_POLNA</name>
<keyword id="KW-0131">Cell cycle</keyword>
<keyword id="KW-0132">Cell division</keyword>
<keyword id="KW-0997">Cell inner membrane</keyword>
<keyword id="KW-1003">Cell membrane</keyword>
<keyword id="KW-0133">Cell shape</keyword>
<keyword id="KW-0961">Cell wall biogenesis/degradation</keyword>
<keyword id="KW-0328">Glycosyltransferase</keyword>
<keyword id="KW-0472">Membrane</keyword>
<keyword id="KW-0573">Peptidoglycan synthesis</keyword>
<keyword id="KW-1185">Reference proteome</keyword>
<keyword id="KW-0808">Transferase</keyword>
<reference key="1">
    <citation type="journal article" date="2009" name="Environ. Microbiol.">
        <title>The genome of Polaromonas naphthalenivorans strain CJ2, isolated from coal tar-contaminated sediment, reveals physiological and metabolic versatility and evolution through extensive horizontal gene transfer.</title>
        <authorList>
            <person name="Yagi J.M."/>
            <person name="Sims D."/>
            <person name="Brettin T."/>
            <person name="Bruce D."/>
            <person name="Madsen E.L."/>
        </authorList>
    </citation>
    <scope>NUCLEOTIDE SEQUENCE [LARGE SCALE GENOMIC DNA]</scope>
    <source>
        <strain>CJ2</strain>
    </source>
</reference>
<organism>
    <name type="scientific">Polaromonas naphthalenivorans (strain CJ2)</name>
    <dbReference type="NCBI Taxonomy" id="365044"/>
    <lineage>
        <taxon>Bacteria</taxon>
        <taxon>Pseudomonadati</taxon>
        <taxon>Pseudomonadota</taxon>
        <taxon>Betaproteobacteria</taxon>
        <taxon>Burkholderiales</taxon>
        <taxon>Comamonadaceae</taxon>
        <taxon>Polaromonas</taxon>
    </lineage>
</organism>